<evidence type="ECO:0000255" key="1">
    <source>
        <dbReference type="HAMAP-Rule" id="MF_00036"/>
    </source>
</evidence>
<feature type="chain" id="PRO_0000347791" description="Alanine--tRNA ligase">
    <location>
        <begin position="1"/>
        <end position="874"/>
    </location>
</feature>
<feature type="binding site" evidence="1">
    <location>
        <position position="562"/>
    </location>
    <ligand>
        <name>Zn(2+)</name>
        <dbReference type="ChEBI" id="CHEBI:29105"/>
    </ligand>
</feature>
<feature type="binding site" evidence="1">
    <location>
        <position position="566"/>
    </location>
    <ligand>
        <name>Zn(2+)</name>
        <dbReference type="ChEBI" id="CHEBI:29105"/>
    </ligand>
</feature>
<feature type="binding site" evidence="1">
    <location>
        <position position="664"/>
    </location>
    <ligand>
        <name>Zn(2+)</name>
        <dbReference type="ChEBI" id="CHEBI:29105"/>
    </ligand>
</feature>
<feature type="binding site" evidence="1">
    <location>
        <position position="668"/>
    </location>
    <ligand>
        <name>Zn(2+)</name>
        <dbReference type="ChEBI" id="CHEBI:29105"/>
    </ligand>
</feature>
<comment type="function">
    <text evidence="1">Catalyzes the attachment of alanine to tRNA(Ala) in a two-step reaction: alanine is first activated by ATP to form Ala-AMP and then transferred to the acceptor end of tRNA(Ala). Also edits incorrectly charged Ser-tRNA(Ala) and Gly-tRNA(Ala) via its editing domain.</text>
</comment>
<comment type="catalytic activity">
    <reaction evidence="1">
        <text>tRNA(Ala) + L-alanine + ATP = L-alanyl-tRNA(Ala) + AMP + diphosphate</text>
        <dbReference type="Rhea" id="RHEA:12540"/>
        <dbReference type="Rhea" id="RHEA-COMP:9657"/>
        <dbReference type="Rhea" id="RHEA-COMP:9923"/>
        <dbReference type="ChEBI" id="CHEBI:30616"/>
        <dbReference type="ChEBI" id="CHEBI:33019"/>
        <dbReference type="ChEBI" id="CHEBI:57972"/>
        <dbReference type="ChEBI" id="CHEBI:78442"/>
        <dbReference type="ChEBI" id="CHEBI:78497"/>
        <dbReference type="ChEBI" id="CHEBI:456215"/>
        <dbReference type="EC" id="6.1.1.7"/>
    </reaction>
</comment>
<comment type="cofactor">
    <cofactor evidence="1">
        <name>Zn(2+)</name>
        <dbReference type="ChEBI" id="CHEBI:29105"/>
    </cofactor>
    <text evidence="1">Binds 1 zinc ion per subunit.</text>
</comment>
<comment type="subcellular location">
    <subcellularLocation>
        <location evidence="1">Cytoplasm</location>
    </subcellularLocation>
</comment>
<comment type="domain">
    <text evidence="1">Consists of three domains; the N-terminal catalytic domain, the editing domain and the C-terminal C-Ala domain. The editing domain removes incorrectly charged amino acids, while the C-Ala domain, along with tRNA(Ala), serves as a bridge to cooperatively bring together the editing and aminoacylation centers thus stimulating deacylation of misacylated tRNAs.</text>
</comment>
<comment type="similarity">
    <text evidence="1">Belongs to the class-II aminoacyl-tRNA synthetase family.</text>
</comment>
<protein>
    <recommendedName>
        <fullName evidence="1">Alanine--tRNA ligase</fullName>
        <ecNumber evidence="1">6.1.1.7</ecNumber>
    </recommendedName>
    <alternativeName>
        <fullName evidence="1">Alanyl-tRNA synthetase</fullName>
        <shortName evidence="1">AlaRS</shortName>
    </alternativeName>
</protein>
<name>SYA_SHESA</name>
<proteinExistence type="inferred from homology"/>
<dbReference type="EC" id="6.1.1.7" evidence="1"/>
<dbReference type="EMBL" id="CP000469">
    <property type="protein sequence ID" value="ABK47363.1"/>
    <property type="molecule type" value="Genomic_DNA"/>
</dbReference>
<dbReference type="RefSeq" id="WP_011716227.1">
    <property type="nucleotide sequence ID" value="NC_008577.1"/>
</dbReference>
<dbReference type="SMR" id="A0KU94"/>
<dbReference type="STRING" id="94122.Shewana3_1128"/>
<dbReference type="KEGG" id="shn:Shewana3_1128"/>
<dbReference type="eggNOG" id="COG0013">
    <property type="taxonomic scope" value="Bacteria"/>
</dbReference>
<dbReference type="HOGENOM" id="CLU_004485_1_1_6"/>
<dbReference type="OrthoDB" id="9803884at2"/>
<dbReference type="Proteomes" id="UP000002589">
    <property type="component" value="Chromosome"/>
</dbReference>
<dbReference type="GO" id="GO:0005829">
    <property type="term" value="C:cytosol"/>
    <property type="evidence" value="ECO:0007669"/>
    <property type="project" value="TreeGrafter"/>
</dbReference>
<dbReference type="GO" id="GO:0004813">
    <property type="term" value="F:alanine-tRNA ligase activity"/>
    <property type="evidence" value="ECO:0007669"/>
    <property type="project" value="UniProtKB-UniRule"/>
</dbReference>
<dbReference type="GO" id="GO:0002161">
    <property type="term" value="F:aminoacyl-tRNA deacylase activity"/>
    <property type="evidence" value="ECO:0007669"/>
    <property type="project" value="TreeGrafter"/>
</dbReference>
<dbReference type="GO" id="GO:0005524">
    <property type="term" value="F:ATP binding"/>
    <property type="evidence" value="ECO:0007669"/>
    <property type="project" value="UniProtKB-UniRule"/>
</dbReference>
<dbReference type="GO" id="GO:0000049">
    <property type="term" value="F:tRNA binding"/>
    <property type="evidence" value="ECO:0007669"/>
    <property type="project" value="UniProtKB-KW"/>
</dbReference>
<dbReference type="GO" id="GO:0008270">
    <property type="term" value="F:zinc ion binding"/>
    <property type="evidence" value="ECO:0007669"/>
    <property type="project" value="UniProtKB-UniRule"/>
</dbReference>
<dbReference type="GO" id="GO:0006419">
    <property type="term" value="P:alanyl-tRNA aminoacylation"/>
    <property type="evidence" value="ECO:0007669"/>
    <property type="project" value="UniProtKB-UniRule"/>
</dbReference>
<dbReference type="GO" id="GO:0045892">
    <property type="term" value="P:negative regulation of DNA-templated transcription"/>
    <property type="evidence" value="ECO:0007669"/>
    <property type="project" value="TreeGrafter"/>
</dbReference>
<dbReference type="CDD" id="cd00673">
    <property type="entry name" value="AlaRS_core"/>
    <property type="match status" value="1"/>
</dbReference>
<dbReference type="FunFam" id="2.40.30.130:FF:000001">
    <property type="entry name" value="Alanine--tRNA ligase"/>
    <property type="match status" value="1"/>
</dbReference>
<dbReference type="FunFam" id="3.10.310.40:FF:000001">
    <property type="entry name" value="Alanine--tRNA ligase"/>
    <property type="match status" value="1"/>
</dbReference>
<dbReference type="FunFam" id="3.30.54.20:FF:000001">
    <property type="entry name" value="Alanine--tRNA ligase"/>
    <property type="match status" value="1"/>
</dbReference>
<dbReference type="FunFam" id="3.30.930.10:FF:000004">
    <property type="entry name" value="Alanine--tRNA ligase"/>
    <property type="match status" value="1"/>
</dbReference>
<dbReference type="FunFam" id="3.30.980.10:FF:000004">
    <property type="entry name" value="Alanine--tRNA ligase, cytoplasmic"/>
    <property type="match status" value="1"/>
</dbReference>
<dbReference type="Gene3D" id="2.40.30.130">
    <property type="match status" value="1"/>
</dbReference>
<dbReference type="Gene3D" id="3.10.310.40">
    <property type="match status" value="1"/>
</dbReference>
<dbReference type="Gene3D" id="3.30.54.20">
    <property type="match status" value="1"/>
</dbReference>
<dbReference type="Gene3D" id="6.10.250.550">
    <property type="match status" value="1"/>
</dbReference>
<dbReference type="Gene3D" id="3.30.930.10">
    <property type="entry name" value="Bira Bifunctional Protein, Domain 2"/>
    <property type="match status" value="1"/>
</dbReference>
<dbReference type="Gene3D" id="3.30.980.10">
    <property type="entry name" value="Threonyl-trna Synthetase, Chain A, domain 2"/>
    <property type="match status" value="1"/>
</dbReference>
<dbReference type="HAMAP" id="MF_00036_B">
    <property type="entry name" value="Ala_tRNA_synth_B"/>
    <property type="match status" value="1"/>
</dbReference>
<dbReference type="InterPro" id="IPR045864">
    <property type="entry name" value="aa-tRNA-synth_II/BPL/LPL"/>
</dbReference>
<dbReference type="InterPro" id="IPR002318">
    <property type="entry name" value="Ala-tRNA-lgiase_IIc"/>
</dbReference>
<dbReference type="InterPro" id="IPR018162">
    <property type="entry name" value="Ala-tRNA-ligase_IIc_anticod-bd"/>
</dbReference>
<dbReference type="InterPro" id="IPR018165">
    <property type="entry name" value="Ala-tRNA-synth_IIc_core"/>
</dbReference>
<dbReference type="InterPro" id="IPR018164">
    <property type="entry name" value="Ala-tRNA-synth_IIc_N"/>
</dbReference>
<dbReference type="InterPro" id="IPR050058">
    <property type="entry name" value="Ala-tRNA_ligase"/>
</dbReference>
<dbReference type="InterPro" id="IPR023033">
    <property type="entry name" value="Ala_tRNA_ligase_euk/bac"/>
</dbReference>
<dbReference type="InterPro" id="IPR003156">
    <property type="entry name" value="DHHA1_dom"/>
</dbReference>
<dbReference type="InterPro" id="IPR018163">
    <property type="entry name" value="Thr/Ala-tRNA-synth_IIc_edit"/>
</dbReference>
<dbReference type="InterPro" id="IPR009000">
    <property type="entry name" value="Transl_B-barrel_sf"/>
</dbReference>
<dbReference type="InterPro" id="IPR012947">
    <property type="entry name" value="tRNA_SAD"/>
</dbReference>
<dbReference type="NCBIfam" id="TIGR00344">
    <property type="entry name" value="alaS"/>
    <property type="match status" value="1"/>
</dbReference>
<dbReference type="PANTHER" id="PTHR11777:SF9">
    <property type="entry name" value="ALANINE--TRNA LIGASE, CYTOPLASMIC"/>
    <property type="match status" value="1"/>
</dbReference>
<dbReference type="PANTHER" id="PTHR11777">
    <property type="entry name" value="ALANYL-TRNA SYNTHETASE"/>
    <property type="match status" value="1"/>
</dbReference>
<dbReference type="Pfam" id="PF02272">
    <property type="entry name" value="DHHA1"/>
    <property type="match status" value="1"/>
</dbReference>
<dbReference type="Pfam" id="PF01411">
    <property type="entry name" value="tRNA-synt_2c"/>
    <property type="match status" value="1"/>
</dbReference>
<dbReference type="Pfam" id="PF07973">
    <property type="entry name" value="tRNA_SAD"/>
    <property type="match status" value="1"/>
</dbReference>
<dbReference type="PRINTS" id="PR00980">
    <property type="entry name" value="TRNASYNTHALA"/>
</dbReference>
<dbReference type="SMART" id="SM00863">
    <property type="entry name" value="tRNA_SAD"/>
    <property type="match status" value="1"/>
</dbReference>
<dbReference type="SUPFAM" id="SSF55681">
    <property type="entry name" value="Class II aaRS and biotin synthetases"/>
    <property type="match status" value="1"/>
</dbReference>
<dbReference type="SUPFAM" id="SSF101353">
    <property type="entry name" value="Putative anticodon-binding domain of alanyl-tRNA synthetase (AlaRS)"/>
    <property type="match status" value="1"/>
</dbReference>
<dbReference type="SUPFAM" id="SSF55186">
    <property type="entry name" value="ThrRS/AlaRS common domain"/>
    <property type="match status" value="1"/>
</dbReference>
<dbReference type="SUPFAM" id="SSF50447">
    <property type="entry name" value="Translation proteins"/>
    <property type="match status" value="1"/>
</dbReference>
<dbReference type="PROSITE" id="PS50860">
    <property type="entry name" value="AA_TRNA_LIGASE_II_ALA"/>
    <property type="match status" value="1"/>
</dbReference>
<gene>
    <name evidence="1" type="primary">alaS</name>
    <name type="ordered locus">Shewana3_1128</name>
</gene>
<sequence length="874" mass="94531">MYQTTAALRSAFLEFFRSNGHQVVDSSSLVPGNDPTLLFTNAGMNQFKDVFLGMDKRSYTRATTAQRCVRAGGKHNDLDNVGYTARHHTFFEMLGNFSFGDYFKEDAIRFGWTFLTEVLKLPKERLCVTVYQTDDEAFEIWNKKIGVAAENIIRIGDNKGAPYASDNFWQMGDTGPCGPCTEIFYDHGDHIWGGRPGSPEEDGDRFIEIWNIVFMQYNRQASGEMLPLPKPSVDTGMGIERIAAIMQGVHSNYEIDIFRALIAKAAEIIGVTDLSNKSLRVIADHIRSCAFLVADGVMPSNEGRGYVLRRIIRRAVRHGNKLGATEAFFYKLVPTLIEVMGDAAKGLADTQVIVEKALKAEEEQFARTLERGLGILDSALNELQGDTLDGETVFKLYDTYGFPVDLTADVCRERNIIVDEAGFEVAMAEQRSRAQAAGNFGADYNAALKIDAETAFCGYSELTGNAKVTALYLNGESVSAISAGDDAVVVLDVTPFYAESGGQVGDKGVLVAQGIEFAVSDTQKFGQASGHKGTLTAGSLSVGQVLEAKVDKKLRHRTQLNHSVTHLLHAALRQVLGTHVTQKGSLVDPERLRFDFSHFEAVKPAELKQVEELVNTQIRRNHELKVAEMAIDEAKEKGAMALFGEKYDAQVRVVTMGDFSIELCGGTHVGRTGDIGLFKITSEGGIAAGVRRIEAVTGAAAMAYVAQQQAQLEEAAALLKGDTQSVVAKLKAQLDKMKQLEKDMQQLKDKLAAAASADLAGDAVVVNGVNVLIKKLEGVEAGALRGLQDELKQKLKSAVILLGVAQEGKVNLIAGVSNDLVGKVKAGELVAMVAAQVGGKGGGRPDMAQAGGSQPENLDAALSQVLPWITERLA</sequence>
<accession>A0KU94</accession>
<reference key="1">
    <citation type="submission" date="2006-09" db="EMBL/GenBank/DDBJ databases">
        <title>Complete sequence of chromosome 1 of Shewanella sp. ANA-3.</title>
        <authorList>
            <person name="Copeland A."/>
            <person name="Lucas S."/>
            <person name="Lapidus A."/>
            <person name="Barry K."/>
            <person name="Detter J.C."/>
            <person name="Glavina del Rio T."/>
            <person name="Hammon N."/>
            <person name="Israni S."/>
            <person name="Dalin E."/>
            <person name="Tice H."/>
            <person name="Pitluck S."/>
            <person name="Chertkov O."/>
            <person name="Brettin T."/>
            <person name="Bruce D."/>
            <person name="Han C."/>
            <person name="Tapia R."/>
            <person name="Gilna P."/>
            <person name="Schmutz J."/>
            <person name="Larimer F."/>
            <person name="Land M."/>
            <person name="Hauser L."/>
            <person name="Kyrpides N."/>
            <person name="Kim E."/>
            <person name="Newman D."/>
            <person name="Salticov C."/>
            <person name="Konstantinidis K."/>
            <person name="Klappenback J."/>
            <person name="Tiedje J."/>
            <person name="Richardson P."/>
        </authorList>
    </citation>
    <scope>NUCLEOTIDE SEQUENCE [LARGE SCALE GENOMIC DNA]</scope>
    <source>
        <strain>ANA-3</strain>
    </source>
</reference>
<keyword id="KW-0030">Aminoacyl-tRNA synthetase</keyword>
<keyword id="KW-0067">ATP-binding</keyword>
<keyword id="KW-0963">Cytoplasm</keyword>
<keyword id="KW-0436">Ligase</keyword>
<keyword id="KW-0479">Metal-binding</keyword>
<keyword id="KW-0547">Nucleotide-binding</keyword>
<keyword id="KW-0648">Protein biosynthesis</keyword>
<keyword id="KW-0694">RNA-binding</keyword>
<keyword id="KW-0820">tRNA-binding</keyword>
<keyword id="KW-0862">Zinc</keyword>
<organism>
    <name type="scientific">Shewanella sp. (strain ANA-3)</name>
    <dbReference type="NCBI Taxonomy" id="94122"/>
    <lineage>
        <taxon>Bacteria</taxon>
        <taxon>Pseudomonadati</taxon>
        <taxon>Pseudomonadota</taxon>
        <taxon>Gammaproteobacteria</taxon>
        <taxon>Alteromonadales</taxon>
        <taxon>Shewanellaceae</taxon>
        <taxon>Shewanella</taxon>
    </lineage>
</organism>